<keyword id="KW-1185">Reference proteome</keyword>
<proteinExistence type="evidence at protein level"/>
<protein>
    <recommendedName>
        <fullName evidence="2">Protein YtjE</fullName>
    </recommendedName>
</protein>
<gene>
    <name evidence="2" type="primary">ytjE</name>
    <name evidence="3" type="ordered locus">b4824</name>
</gene>
<sequence>MSRFIFYKIILSKQKDM</sequence>
<organism>
    <name type="scientific">Escherichia coli (strain K12)</name>
    <dbReference type="NCBI Taxonomy" id="83333"/>
    <lineage>
        <taxon>Bacteria</taxon>
        <taxon>Pseudomonadati</taxon>
        <taxon>Pseudomonadota</taxon>
        <taxon>Gammaproteobacteria</taxon>
        <taxon>Enterobacterales</taxon>
        <taxon>Enterobacteriaceae</taxon>
        <taxon>Escherichia</taxon>
    </lineage>
</organism>
<accession>P0DV23</accession>
<name>YTJE_ECOLI</name>
<comment type="induction">
    <text evidence="1">Identified when cells are grown in rich medium (at protein level).</text>
</comment>
<dbReference type="EMBL" id="U00096">
    <property type="protein sequence ID" value="UMR55121.1"/>
    <property type="molecule type" value="Genomic_DNA"/>
</dbReference>
<dbReference type="InParanoid" id="P0DV23"/>
<dbReference type="BioCyc" id="EcoCyc:MONOMER0-4551"/>
<dbReference type="Proteomes" id="UP000000625">
    <property type="component" value="Chromosome"/>
</dbReference>
<reference key="1">
    <citation type="journal article" date="1997" name="Science">
        <title>The complete genome sequence of Escherichia coli K-12.</title>
        <authorList>
            <person name="Blattner F.R."/>
            <person name="Plunkett G. III"/>
            <person name="Bloch C.A."/>
            <person name="Perna N.T."/>
            <person name="Burland V."/>
            <person name="Riley M."/>
            <person name="Collado-Vides J."/>
            <person name="Glasner J.D."/>
            <person name="Rode C.K."/>
            <person name="Mayhew G.F."/>
            <person name="Gregor J."/>
            <person name="Davis N.W."/>
            <person name="Kirkpatrick H.A."/>
            <person name="Goeden M.A."/>
            <person name="Rose D.J."/>
            <person name="Mau B."/>
            <person name="Shao Y."/>
        </authorList>
    </citation>
    <scope>NUCLEOTIDE SEQUENCE [LARGE SCALE GENOMIC DNA]</scope>
    <source>
        <strain>K12 / MG1655 / ATCC 47076</strain>
    </source>
</reference>
<reference key="2">
    <citation type="journal article" date="2022" name="J. Bacteriol.">
        <title>Identification of novel translated small ORFs in Escherichia coli using complementary ribosome profiling approaches.</title>
        <authorList>
            <person name="Stringer A."/>
            <person name="Smith C."/>
            <person name="Mangano K."/>
            <person name="Wade J.T."/>
        </authorList>
    </citation>
    <scope>IDENTIFICATION</scope>
    <source>
        <strain>K12 / MG1655 / ATCC 47076</strain>
    </source>
</reference>
<feature type="chain" id="PRO_0000454744" description="Protein YtjE">
    <location>
        <begin position="1"/>
        <end position="17"/>
    </location>
</feature>
<evidence type="ECO:0000269" key="1">
    <source>
    </source>
</evidence>
<evidence type="ECO:0000303" key="2">
    <source>
    </source>
</evidence>
<evidence type="ECO:0000312" key="3">
    <source>
        <dbReference type="EMBL" id="UMR55121.1"/>
    </source>
</evidence>